<feature type="chain" id="PRO_0000176028" description="UPF0178 protein YPTB2755">
    <location>
        <begin position="1"/>
        <end position="152"/>
    </location>
</feature>
<sequence>MQIWVDADACPNVIKEVLFRAADRTGMMVTLVANQPLKTPPSKFIRTVQVASGFDVADNEIVQRVEKNDLVITADIPLAAEVIEKGGIALNPRGERYTPDTIRERLNMRDFMDTMRASGIQTGGPNTLNQRDRQQFANELDKWLQQARNQAK</sequence>
<dbReference type="EMBL" id="BX936398">
    <property type="protein sequence ID" value="CAH21993.1"/>
    <property type="molecule type" value="Genomic_DNA"/>
</dbReference>
<dbReference type="RefSeq" id="WP_002208527.1">
    <property type="nucleotide sequence ID" value="NZ_CP009712.1"/>
</dbReference>
<dbReference type="KEGG" id="ypo:BZ17_3875"/>
<dbReference type="KEGG" id="yps:YPTB2755"/>
<dbReference type="PATRIC" id="fig|273123.14.peg.4072"/>
<dbReference type="Proteomes" id="UP000001011">
    <property type="component" value="Chromosome"/>
</dbReference>
<dbReference type="CDD" id="cd18720">
    <property type="entry name" value="PIN_YqxD-like"/>
    <property type="match status" value="1"/>
</dbReference>
<dbReference type="HAMAP" id="MF_00489">
    <property type="entry name" value="UPF0178"/>
    <property type="match status" value="1"/>
</dbReference>
<dbReference type="InterPro" id="IPR003791">
    <property type="entry name" value="UPF0178"/>
</dbReference>
<dbReference type="NCBIfam" id="NF001095">
    <property type="entry name" value="PRK00124.1"/>
    <property type="match status" value="1"/>
</dbReference>
<dbReference type="PANTHER" id="PTHR35146">
    <property type="entry name" value="UPF0178 PROTEIN YAII"/>
    <property type="match status" value="1"/>
</dbReference>
<dbReference type="PANTHER" id="PTHR35146:SF1">
    <property type="entry name" value="UPF0178 PROTEIN YAII"/>
    <property type="match status" value="1"/>
</dbReference>
<dbReference type="Pfam" id="PF02639">
    <property type="entry name" value="DUF188"/>
    <property type="match status" value="1"/>
</dbReference>
<reference key="1">
    <citation type="journal article" date="2004" name="Proc. Natl. Acad. Sci. U.S.A.">
        <title>Insights into the evolution of Yersinia pestis through whole-genome comparison with Yersinia pseudotuberculosis.</title>
        <authorList>
            <person name="Chain P.S.G."/>
            <person name="Carniel E."/>
            <person name="Larimer F.W."/>
            <person name="Lamerdin J."/>
            <person name="Stoutland P.O."/>
            <person name="Regala W.M."/>
            <person name="Georgescu A.M."/>
            <person name="Vergez L.M."/>
            <person name="Land M.L."/>
            <person name="Motin V.L."/>
            <person name="Brubaker R.R."/>
            <person name="Fowler J."/>
            <person name="Hinnebusch J."/>
            <person name="Marceau M."/>
            <person name="Medigue C."/>
            <person name="Simonet M."/>
            <person name="Chenal-Francisque V."/>
            <person name="Souza B."/>
            <person name="Dacheux D."/>
            <person name="Elliott J.M."/>
            <person name="Derbise A."/>
            <person name="Hauser L.J."/>
            <person name="Garcia E."/>
        </authorList>
    </citation>
    <scope>NUCLEOTIDE SEQUENCE [LARGE SCALE GENOMIC DNA]</scope>
    <source>
        <strain>IP32953</strain>
    </source>
</reference>
<name>Y2755_YERPS</name>
<organism>
    <name type="scientific">Yersinia pseudotuberculosis serotype I (strain IP32953)</name>
    <dbReference type="NCBI Taxonomy" id="273123"/>
    <lineage>
        <taxon>Bacteria</taxon>
        <taxon>Pseudomonadati</taxon>
        <taxon>Pseudomonadota</taxon>
        <taxon>Gammaproteobacteria</taxon>
        <taxon>Enterobacterales</taxon>
        <taxon>Yersiniaceae</taxon>
        <taxon>Yersinia</taxon>
    </lineage>
</organism>
<gene>
    <name type="ordered locus">YPTB2755</name>
</gene>
<comment type="similarity">
    <text evidence="1">Belongs to the UPF0178 family.</text>
</comment>
<proteinExistence type="inferred from homology"/>
<accession>Q668I5</accession>
<evidence type="ECO:0000255" key="1">
    <source>
        <dbReference type="HAMAP-Rule" id="MF_00489"/>
    </source>
</evidence>
<protein>
    <recommendedName>
        <fullName evidence="1">UPF0178 protein YPTB2755</fullName>
    </recommendedName>
</protein>